<keyword id="KW-0002">3D-structure</keyword>
<keyword id="KW-0025">Alternative splicing</keyword>
<keyword id="KW-0968">Cytoplasmic vesicle</keyword>
<keyword id="KW-0931">ER-Golgi transport</keyword>
<keyword id="KW-0333">Golgi apparatus</keyword>
<keyword id="KW-0342">GTP-binding</keyword>
<keyword id="KW-0378">Hydrolase</keyword>
<keyword id="KW-0449">Lipoprotein</keyword>
<keyword id="KW-0460">Magnesium</keyword>
<keyword id="KW-0472">Membrane</keyword>
<keyword id="KW-0479">Metal-binding</keyword>
<keyword id="KW-0488">Methylation</keyword>
<keyword id="KW-0547">Nucleotide-binding</keyword>
<keyword id="KW-0597">Phosphoprotein</keyword>
<keyword id="KW-0636">Prenylation</keyword>
<keyword id="KW-0653">Protein transport</keyword>
<keyword id="KW-1267">Proteomics identification</keyword>
<keyword id="KW-1185">Reference proteome</keyword>
<keyword id="KW-0813">Transport</keyword>
<reference key="1">
    <citation type="journal article" date="2000" name="J. Cell Sci.">
        <title>The small GTPase Rab6B, a novel Rab6 subfamily member, is cell-type specifically expressed and localised to the Golgi apparatus.</title>
        <authorList>
            <person name="Opdam F.J.M."/>
            <person name="Echard A."/>
            <person name="Croes H.J.E."/>
            <person name="van den Hurk J.A.J.M."/>
            <person name="van de Vorstenbosch R.A."/>
            <person name="Ginsel L.A."/>
            <person name="Goud B."/>
            <person name="Fransen J.A.M."/>
        </authorList>
    </citation>
    <scope>NUCLEOTIDE SEQUENCE [MRNA] (ISOFORM 1)</scope>
</reference>
<reference key="2">
    <citation type="submission" date="2002-04" db="EMBL/GenBank/DDBJ databases">
        <title>cDNA clones of human proteins involved in signal transduction sequenced by the Guthrie cDNA resource center (www.cdna.org).</title>
        <authorList>
            <person name="Puhl H.L. III"/>
            <person name="Ikeda S.R."/>
            <person name="Aronstam R.S."/>
        </authorList>
    </citation>
    <scope>NUCLEOTIDE SEQUENCE [LARGE SCALE MRNA] (ISOFORM 1)</scope>
    <source>
        <tissue>Brain</tissue>
    </source>
</reference>
<reference key="3">
    <citation type="submission" date="2003-05" db="EMBL/GenBank/DDBJ databases">
        <title>Cloning of human full-length CDSs in BD Creator(TM) system donor vector.</title>
        <authorList>
            <person name="Kalnine N."/>
            <person name="Chen X."/>
            <person name="Rolfs A."/>
            <person name="Halleck A."/>
            <person name="Hines L."/>
            <person name="Eisenstein S."/>
            <person name="Koundinya M."/>
            <person name="Raphael J."/>
            <person name="Moreira D."/>
            <person name="Kelley T."/>
            <person name="LaBaer J."/>
            <person name="Lin Y."/>
            <person name="Phelan M."/>
            <person name="Farmer A."/>
        </authorList>
    </citation>
    <scope>NUCLEOTIDE SEQUENCE [LARGE SCALE MRNA] (ISOFORM 1)</scope>
</reference>
<reference key="4">
    <citation type="journal article" date="2004" name="Nat. Genet.">
        <title>Complete sequencing and characterization of 21,243 full-length human cDNAs.</title>
        <authorList>
            <person name="Ota T."/>
            <person name="Suzuki Y."/>
            <person name="Nishikawa T."/>
            <person name="Otsuki T."/>
            <person name="Sugiyama T."/>
            <person name="Irie R."/>
            <person name="Wakamatsu A."/>
            <person name="Hayashi K."/>
            <person name="Sato H."/>
            <person name="Nagai K."/>
            <person name="Kimura K."/>
            <person name="Makita H."/>
            <person name="Sekine M."/>
            <person name="Obayashi M."/>
            <person name="Nishi T."/>
            <person name="Shibahara T."/>
            <person name="Tanaka T."/>
            <person name="Ishii S."/>
            <person name="Yamamoto J."/>
            <person name="Saito K."/>
            <person name="Kawai Y."/>
            <person name="Isono Y."/>
            <person name="Nakamura Y."/>
            <person name="Nagahari K."/>
            <person name="Murakami K."/>
            <person name="Yasuda T."/>
            <person name="Iwayanagi T."/>
            <person name="Wagatsuma M."/>
            <person name="Shiratori A."/>
            <person name="Sudo H."/>
            <person name="Hosoiri T."/>
            <person name="Kaku Y."/>
            <person name="Kodaira H."/>
            <person name="Kondo H."/>
            <person name="Sugawara M."/>
            <person name="Takahashi M."/>
            <person name="Kanda K."/>
            <person name="Yokoi T."/>
            <person name="Furuya T."/>
            <person name="Kikkawa E."/>
            <person name="Omura Y."/>
            <person name="Abe K."/>
            <person name="Kamihara K."/>
            <person name="Katsuta N."/>
            <person name="Sato K."/>
            <person name="Tanikawa M."/>
            <person name="Yamazaki M."/>
            <person name="Ninomiya K."/>
            <person name="Ishibashi T."/>
            <person name="Yamashita H."/>
            <person name="Murakawa K."/>
            <person name="Fujimori K."/>
            <person name="Tanai H."/>
            <person name="Kimata M."/>
            <person name="Watanabe M."/>
            <person name="Hiraoka S."/>
            <person name="Chiba Y."/>
            <person name="Ishida S."/>
            <person name="Ono Y."/>
            <person name="Takiguchi S."/>
            <person name="Watanabe S."/>
            <person name="Yosida M."/>
            <person name="Hotuta T."/>
            <person name="Kusano J."/>
            <person name="Kanehori K."/>
            <person name="Takahashi-Fujii A."/>
            <person name="Hara H."/>
            <person name="Tanase T.-O."/>
            <person name="Nomura Y."/>
            <person name="Togiya S."/>
            <person name="Komai F."/>
            <person name="Hara R."/>
            <person name="Takeuchi K."/>
            <person name="Arita M."/>
            <person name="Imose N."/>
            <person name="Musashino K."/>
            <person name="Yuuki H."/>
            <person name="Oshima A."/>
            <person name="Sasaki N."/>
            <person name="Aotsuka S."/>
            <person name="Yoshikawa Y."/>
            <person name="Matsunawa H."/>
            <person name="Ichihara T."/>
            <person name="Shiohata N."/>
            <person name="Sano S."/>
            <person name="Moriya S."/>
            <person name="Momiyama H."/>
            <person name="Satoh N."/>
            <person name="Takami S."/>
            <person name="Terashima Y."/>
            <person name="Suzuki O."/>
            <person name="Nakagawa S."/>
            <person name="Senoh A."/>
            <person name="Mizoguchi H."/>
            <person name="Goto Y."/>
            <person name="Shimizu F."/>
            <person name="Wakebe H."/>
            <person name="Hishigaki H."/>
            <person name="Watanabe T."/>
            <person name="Sugiyama A."/>
            <person name="Takemoto M."/>
            <person name="Kawakami B."/>
            <person name="Yamazaki M."/>
            <person name="Watanabe K."/>
            <person name="Kumagai A."/>
            <person name="Itakura S."/>
            <person name="Fukuzumi Y."/>
            <person name="Fujimori Y."/>
            <person name="Komiyama M."/>
            <person name="Tashiro H."/>
            <person name="Tanigami A."/>
            <person name="Fujiwara T."/>
            <person name="Ono T."/>
            <person name="Yamada K."/>
            <person name="Fujii Y."/>
            <person name="Ozaki K."/>
            <person name="Hirao M."/>
            <person name="Ohmori Y."/>
            <person name="Kawabata A."/>
            <person name="Hikiji T."/>
            <person name="Kobatake N."/>
            <person name="Inagaki H."/>
            <person name="Ikema Y."/>
            <person name="Okamoto S."/>
            <person name="Okitani R."/>
            <person name="Kawakami T."/>
            <person name="Noguchi S."/>
            <person name="Itoh T."/>
            <person name="Shigeta K."/>
            <person name="Senba T."/>
            <person name="Matsumura K."/>
            <person name="Nakajima Y."/>
            <person name="Mizuno T."/>
            <person name="Morinaga M."/>
            <person name="Sasaki M."/>
            <person name="Togashi T."/>
            <person name="Oyama M."/>
            <person name="Hata H."/>
            <person name="Watanabe M."/>
            <person name="Komatsu T."/>
            <person name="Mizushima-Sugano J."/>
            <person name="Satoh T."/>
            <person name="Shirai Y."/>
            <person name="Takahashi Y."/>
            <person name="Nakagawa K."/>
            <person name="Okumura K."/>
            <person name="Nagase T."/>
            <person name="Nomura N."/>
            <person name="Kikuchi H."/>
            <person name="Masuho Y."/>
            <person name="Yamashita R."/>
            <person name="Nakai K."/>
            <person name="Yada T."/>
            <person name="Nakamura Y."/>
            <person name="Ohara O."/>
            <person name="Isogai T."/>
            <person name="Sugano S."/>
        </authorList>
    </citation>
    <scope>NUCLEOTIDE SEQUENCE [LARGE SCALE MRNA] (ISOFORMS 1 AND 2)</scope>
    <source>
        <tissue>Amygdala</tissue>
        <tissue>Hippocampus</tissue>
    </source>
</reference>
<reference key="5">
    <citation type="journal article" date="2006" name="Nature">
        <title>The DNA sequence, annotation and analysis of human chromosome 3.</title>
        <authorList>
            <person name="Muzny D.M."/>
            <person name="Scherer S.E."/>
            <person name="Kaul R."/>
            <person name="Wang J."/>
            <person name="Yu J."/>
            <person name="Sudbrak R."/>
            <person name="Buhay C.J."/>
            <person name="Chen R."/>
            <person name="Cree A."/>
            <person name="Ding Y."/>
            <person name="Dugan-Rocha S."/>
            <person name="Gill R."/>
            <person name="Gunaratne P."/>
            <person name="Harris R.A."/>
            <person name="Hawes A.C."/>
            <person name="Hernandez J."/>
            <person name="Hodgson A.V."/>
            <person name="Hume J."/>
            <person name="Jackson A."/>
            <person name="Khan Z.M."/>
            <person name="Kovar-Smith C."/>
            <person name="Lewis L.R."/>
            <person name="Lozado R.J."/>
            <person name="Metzker M.L."/>
            <person name="Milosavljevic A."/>
            <person name="Miner G.R."/>
            <person name="Morgan M.B."/>
            <person name="Nazareth L.V."/>
            <person name="Scott G."/>
            <person name="Sodergren E."/>
            <person name="Song X.-Z."/>
            <person name="Steffen D."/>
            <person name="Wei S."/>
            <person name="Wheeler D.A."/>
            <person name="Wright M.W."/>
            <person name="Worley K.C."/>
            <person name="Yuan Y."/>
            <person name="Zhang Z."/>
            <person name="Adams C.Q."/>
            <person name="Ansari-Lari M.A."/>
            <person name="Ayele M."/>
            <person name="Brown M.J."/>
            <person name="Chen G."/>
            <person name="Chen Z."/>
            <person name="Clendenning J."/>
            <person name="Clerc-Blankenburg K.P."/>
            <person name="Chen R."/>
            <person name="Chen Z."/>
            <person name="Davis C."/>
            <person name="Delgado O."/>
            <person name="Dinh H.H."/>
            <person name="Dong W."/>
            <person name="Draper H."/>
            <person name="Ernst S."/>
            <person name="Fu G."/>
            <person name="Gonzalez-Garay M.L."/>
            <person name="Garcia D.K."/>
            <person name="Gillett W."/>
            <person name="Gu J."/>
            <person name="Hao B."/>
            <person name="Haugen E."/>
            <person name="Havlak P."/>
            <person name="He X."/>
            <person name="Hennig S."/>
            <person name="Hu S."/>
            <person name="Huang W."/>
            <person name="Jackson L.R."/>
            <person name="Jacob L.S."/>
            <person name="Kelly S.H."/>
            <person name="Kube M."/>
            <person name="Levy R."/>
            <person name="Li Z."/>
            <person name="Liu B."/>
            <person name="Liu J."/>
            <person name="Liu W."/>
            <person name="Lu J."/>
            <person name="Maheshwari M."/>
            <person name="Nguyen B.-V."/>
            <person name="Okwuonu G.O."/>
            <person name="Palmeiri A."/>
            <person name="Pasternak S."/>
            <person name="Perez L.M."/>
            <person name="Phelps K.A."/>
            <person name="Plopper F.J."/>
            <person name="Qiang B."/>
            <person name="Raymond C."/>
            <person name="Rodriguez R."/>
            <person name="Saenphimmachak C."/>
            <person name="Santibanez J."/>
            <person name="Shen H."/>
            <person name="Shen Y."/>
            <person name="Subramanian S."/>
            <person name="Tabor P.E."/>
            <person name="Verduzco D."/>
            <person name="Waldron L."/>
            <person name="Wang J."/>
            <person name="Wang J."/>
            <person name="Wang Q."/>
            <person name="Williams G.A."/>
            <person name="Wong G.K.-S."/>
            <person name="Yao Z."/>
            <person name="Zhang J."/>
            <person name="Zhang X."/>
            <person name="Zhao G."/>
            <person name="Zhou J."/>
            <person name="Zhou Y."/>
            <person name="Nelson D."/>
            <person name="Lehrach H."/>
            <person name="Reinhardt R."/>
            <person name="Naylor S.L."/>
            <person name="Yang H."/>
            <person name="Olson M."/>
            <person name="Weinstock G."/>
            <person name="Gibbs R.A."/>
        </authorList>
    </citation>
    <scope>NUCLEOTIDE SEQUENCE [LARGE SCALE GENOMIC DNA]</scope>
</reference>
<reference key="6">
    <citation type="submission" date="2005-09" db="EMBL/GenBank/DDBJ databases">
        <authorList>
            <person name="Mural R.J."/>
            <person name="Istrail S."/>
            <person name="Sutton G.G."/>
            <person name="Florea L."/>
            <person name="Halpern A.L."/>
            <person name="Mobarry C.M."/>
            <person name="Lippert R."/>
            <person name="Walenz B."/>
            <person name="Shatkay H."/>
            <person name="Dew I."/>
            <person name="Miller J.R."/>
            <person name="Flanigan M.J."/>
            <person name="Edwards N.J."/>
            <person name="Bolanos R."/>
            <person name="Fasulo D."/>
            <person name="Halldorsson B.V."/>
            <person name="Hannenhalli S."/>
            <person name="Turner R."/>
            <person name="Yooseph S."/>
            <person name="Lu F."/>
            <person name="Nusskern D.R."/>
            <person name="Shue B.C."/>
            <person name="Zheng X.H."/>
            <person name="Zhong F."/>
            <person name="Delcher A.L."/>
            <person name="Huson D.H."/>
            <person name="Kravitz S.A."/>
            <person name="Mouchard L."/>
            <person name="Reinert K."/>
            <person name="Remington K.A."/>
            <person name="Clark A.G."/>
            <person name="Waterman M.S."/>
            <person name="Eichler E.E."/>
            <person name="Adams M.D."/>
            <person name="Hunkapiller M.W."/>
            <person name="Myers E.W."/>
            <person name="Venter J.C."/>
        </authorList>
    </citation>
    <scope>NUCLEOTIDE SEQUENCE [LARGE SCALE GENOMIC DNA]</scope>
</reference>
<reference key="7">
    <citation type="journal article" date="2004" name="Genome Res.">
        <title>The status, quality, and expansion of the NIH full-length cDNA project: the Mammalian Gene Collection (MGC).</title>
        <authorList>
            <consortium name="The MGC Project Team"/>
        </authorList>
    </citation>
    <scope>NUCLEOTIDE SEQUENCE [LARGE SCALE MRNA] (ISOFORM 1)</scope>
    <source>
        <tissue>Skin</tissue>
    </source>
</reference>
<reference key="8">
    <citation type="journal article" date="1997" name="Biochim. Biophys. Acta">
        <title>RAB GTPases expressed in human melanoma cells.</title>
        <authorList>
            <person name="Chen D."/>
            <person name="Guo J."/>
            <person name="Gahl W.A."/>
        </authorList>
    </citation>
    <scope>NUCLEOTIDE SEQUENCE [MRNA] OF 72-124 (ISOFORM 1/2)</scope>
</reference>
<reference key="9">
    <citation type="journal article" date="2007" name="Exp. Cell Res.">
        <title>A role for the Rab6B Bicaudal-D1 interaction in retrograde transport in neuronal cells.</title>
        <authorList>
            <person name="Wanschers B.F.J.F."/>
            <person name="van de Vorstenbosch R."/>
            <person name="Schlager M.A."/>
            <person name="Splinter D."/>
            <person name="Akhmanova A."/>
            <person name="Hoogenraad C.C."/>
            <person name="Wieringa B."/>
            <person name="Fransen J.A."/>
        </authorList>
    </citation>
    <scope>FUNCTION</scope>
    <scope>INTERACTION WITH BICD1</scope>
    <scope>SUBCELLULAR LOCATION</scope>
</reference>
<reference key="10">
    <citation type="journal article" date="2008" name="Cell Motil. Cytoskeleton">
        <title>Rab6 family proteins interact with the dynein light chain protein DYNLRB1.</title>
        <authorList>
            <person name="Wanschers B.F.J."/>
            <person name="van de Vorstenbosch R."/>
            <person name="Wijers M."/>
            <person name="Wieringa B."/>
            <person name="King S.M."/>
            <person name="Fransen J."/>
        </authorList>
    </citation>
    <scope>INTERACTION WITH DYNLRB1</scope>
    <scope>SUBCELLULAR LOCATION</scope>
</reference>
<reference key="11">
    <citation type="journal article" date="2011" name="BMC Syst. Biol.">
        <title>Initial characterization of the human central proteome.</title>
        <authorList>
            <person name="Burkard T.R."/>
            <person name="Planyavsky M."/>
            <person name="Kaupe I."/>
            <person name="Breitwieser F.P."/>
            <person name="Buerckstuemmer T."/>
            <person name="Bennett K.L."/>
            <person name="Superti-Furga G."/>
            <person name="Colinge J."/>
        </authorList>
    </citation>
    <scope>IDENTIFICATION BY MASS SPECTROMETRY [LARGE SCALE ANALYSIS]</scope>
</reference>
<reference key="12">
    <citation type="journal article" date="2011" name="Nature">
        <title>Modulation of Rab GTPase function by a protein phosphocholine transferase.</title>
        <authorList>
            <person name="Mukherjee S."/>
            <person name="Liu X."/>
            <person name="Arasaki K."/>
            <person name="McDonough J."/>
            <person name="Galan J.E."/>
            <person name="Roy C.R."/>
        </authorList>
    </citation>
    <scope>AMPYLATION AT TYR-82</scope>
</reference>
<reference key="13">
    <citation type="journal article" date="2013" name="PLoS ONE">
        <title>A new Mint1 isoform, but not the conventional Mint1, interacts with the small GTPase Rab6.</title>
        <authorList>
            <person name="Thyrock A."/>
            <person name="Ossendorf E."/>
            <person name="Stehling M."/>
            <person name="Kail M."/>
            <person name="Kurtz T."/>
            <person name="Pohlentz G."/>
            <person name="Waschbusch D."/>
            <person name="Eggert S."/>
            <person name="Formstecher E."/>
            <person name="Muthing J."/>
            <person name="Dreisewerd K."/>
            <person name="Kins S."/>
            <person name="Goud B."/>
            <person name="Barnekow A."/>
        </authorList>
    </citation>
    <scope>INTERACTION WITH APBA1</scope>
    <scope>MUTAGENESIS OF THR-27 AND GLN-72</scope>
</reference>
<reference key="14">
    <citation type="journal article" date="2015" name="J. Biol. Chem.">
        <title>Small GTPase Rab2B and Its Specific Binding Protein Golgi-associated Rab2B Interactor-like 4 (GARI-L4) Regulate Golgi Morphology.</title>
        <authorList>
            <person name="Aizawa M."/>
            <person name="Fukuda M."/>
        </authorList>
    </citation>
    <scope>FUNCTION</scope>
</reference>
<reference key="15">
    <citation type="journal article" date="2015" name="J. Biol. Chem.">
        <title>Cohen syndrome-associated protein COH1 physically and functionally interacts with the small GTPase RAB6 at the Golgi complex and directs neurite outgrowth.</title>
        <authorList>
            <person name="Seifert W."/>
            <person name="Kuehnisch J."/>
            <person name="Maritzen T."/>
            <person name="Lommatzsch S."/>
            <person name="Hennies H.C."/>
            <person name="Bachmann S."/>
            <person name="Horn D."/>
            <person name="Haucke V."/>
        </authorList>
    </citation>
    <scope>FUNCTION</scope>
    <scope>INTERACTION WITH VPS13B</scope>
    <scope>SUBCELLULAR LOCATION</scope>
    <scope>MUTAGENESIS OF THR-27 AND GLN-72</scope>
</reference>
<reference evidence="14 15" key="16">
    <citation type="journal article" date="2006" name="Acta Crystallogr. D">
        <title>The structure of human neuronal Rab6B in the active and inactive form.</title>
        <authorList>
            <person name="Garcia-Saez I."/>
            <person name="Tcherniuk S."/>
            <person name="Kozielski F."/>
        </authorList>
    </citation>
    <scope>X-RAY CRYSTALLOGRAPHY (1.78 ANGSTROMS) OF 13-174 IN COMPLEX WITH MG(2+)</scope>
    <scope>CATALYTIC ACTIVITY</scope>
    <scope>COFACTOR</scope>
    <scope>DOMAIN</scope>
</reference>
<dbReference type="EC" id="3.6.5.2" evidence="12"/>
<dbReference type="EMBL" id="AF166492">
    <property type="protein sequence ID" value="AAF61637.1"/>
    <property type="molecule type" value="mRNA"/>
</dbReference>
<dbReference type="EMBL" id="AF498940">
    <property type="protein sequence ID" value="AAM21088.1"/>
    <property type="molecule type" value="mRNA"/>
</dbReference>
<dbReference type="EMBL" id="BT007263">
    <property type="protein sequence ID" value="AAP35927.1"/>
    <property type="molecule type" value="mRNA"/>
</dbReference>
<dbReference type="EMBL" id="AK295451">
    <property type="protein sequence ID" value="BAH12073.1"/>
    <property type="molecule type" value="mRNA"/>
</dbReference>
<dbReference type="EMBL" id="AK312378">
    <property type="protein sequence ID" value="BAG35296.1"/>
    <property type="molecule type" value="mRNA"/>
</dbReference>
<dbReference type="EMBL" id="AC080128">
    <property type="status" value="NOT_ANNOTATED_CDS"/>
    <property type="molecule type" value="Genomic_DNA"/>
</dbReference>
<dbReference type="EMBL" id="CH471052">
    <property type="protein sequence ID" value="EAW79158.1"/>
    <property type="molecule type" value="Genomic_DNA"/>
</dbReference>
<dbReference type="EMBL" id="CH471052">
    <property type="protein sequence ID" value="EAW79159.1"/>
    <property type="molecule type" value="Genomic_DNA"/>
</dbReference>
<dbReference type="EMBL" id="BC002510">
    <property type="protein sequence ID" value="AAH02510.1"/>
    <property type="molecule type" value="mRNA"/>
</dbReference>
<dbReference type="EMBL" id="U66623">
    <property type="protein sequence ID" value="AAC51198.1"/>
    <property type="molecule type" value="mRNA"/>
</dbReference>
<dbReference type="CCDS" id="CCDS3082.1">
    <molecule id="Q9NRW1-1"/>
</dbReference>
<dbReference type="CCDS" id="CCDS87137.1">
    <molecule id="Q9NRW1-2"/>
</dbReference>
<dbReference type="RefSeq" id="NP_001350882.1">
    <molecule id="Q9NRW1-2"/>
    <property type="nucleotide sequence ID" value="NM_001363953.1"/>
</dbReference>
<dbReference type="RefSeq" id="NP_057661.3">
    <molecule id="Q9NRW1-1"/>
    <property type="nucleotide sequence ID" value="NM_016577.4"/>
</dbReference>
<dbReference type="RefSeq" id="XP_011511195.1">
    <property type="nucleotide sequence ID" value="XM_011512893.2"/>
</dbReference>
<dbReference type="PDB" id="2E9S">
    <property type="method" value="X-ray"/>
    <property type="resolution" value="1.78 A"/>
    <property type="chains" value="A/B/C=13-174"/>
</dbReference>
<dbReference type="PDB" id="2FE4">
    <property type="method" value="X-ray"/>
    <property type="resolution" value="2.30 A"/>
    <property type="chains" value="A=13-174"/>
</dbReference>
<dbReference type="PDB" id="2FFQ">
    <property type="method" value="X-ray"/>
    <property type="resolution" value="1.78 A"/>
    <property type="chains" value="A=13-174"/>
</dbReference>
<dbReference type="PDBsum" id="2E9S"/>
<dbReference type="PDBsum" id="2FE4"/>
<dbReference type="PDBsum" id="2FFQ"/>
<dbReference type="SMR" id="Q9NRW1"/>
<dbReference type="BioGRID" id="119610">
    <property type="interactions" value="109"/>
</dbReference>
<dbReference type="FunCoup" id="Q9NRW1">
    <property type="interactions" value="1762"/>
</dbReference>
<dbReference type="IntAct" id="Q9NRW1">
    <property type="interactions" value="74"/>
</dbReference>
<dbReference type="MINT" id="Q9NRW1"/>
<dbReference type="STRING" id="9606.ENSP00000285208"/>
<dbReference type="GlyGen" id="Q9NRW1">
    <property type="glycosylation" value="1 site, 1 O-linked glycan (1 site)"/>
</dbReference>
<dbReference type="iPTMnet" id="Q9NRW1"/>
<dbReference type="PhosphoSitePlus" id="Q9NRW1"/>
<dbReference type="SwissPalm" id="Q9NRW1"/>
<dbReference type="BioMuta" id="RAB6B"/>
<dbReference type="DMDM" id="13633595"/>
<dbReference type="jPOST" id="Q9NRW1"/>
<dbReference type="MassIVE" id="Q9NRW1"/>
<dbReference type="PaxDb" id="9606-ENSP00000285208"/>
<dbReference type="PeptideAtlas" id="Q9NRW1"/>
<dbReference type="Pumba" id="Q9NRW1"/>
<dbReference type="Antibodypedia" id="46687">
    <property type="antibodies" value="184 antibodies from 24 providers"/>
</dbReference>
<dbReference type="DNASU" id="51560"/>
<dbReference type="Ensembl" id="ENST00000285208.9">
    <molecule id="Q9NRW1-1"/>
    <property type="protein sequence ID" value="ENSP00000285208.4"/>
    <property type="gene ID" value="ENSG00000154917.11"/>
</dbReference>
<dbReference type="Ensembl" id="ENST00000486858.5">
    <molecule id="Q9NRW1-2"/>
    <property type="protein sequence ID" value="ENSP00000419381.1"/>
    <property type="gene ID" value="ENSG00000154917.11"/>
</dbReference>
<dbReference type="Ensembl" id="ENST00000543906.5">
    <molecule id="Q9NRW1-1"/>
    <property type="protein sequence ID" value="ENSP00000437797.1"/>
    <property type="gene ID" value="ENSG00000154917.11"/>
</dbReference>
<dbReference type="GeneID" id="51560"/>
<dbReference type="KEGG" id="hsa:51560"/>
<dbReference type="MANE-Select" id="ENST00000285208.9">
    <property type="protein sequence ID" value="ENSP00000285208.4"/>
    <property type="RefSeq nucleotide sequence ID" value="NM_016577.4"/>
    <property type="RefSeq protein sequence ID" value="NP_057661.3"/>
</dbReference>
<dbReference type="UCSC" id="uc003epy.4">
    <molecule id="Q9NRW1-1"/>
    <property type="organism name" value="human"/>
</dbReference>
<dbReference type="AGR" id="HGNC:14902"/>
<dbReference type="CTD" id="51560"/>
<dbReference type="DisGeNET" id="51560"/>
<dbReference type="GeneCards" id="RAB6B"/>
<dbReference type="HGNC" id="HGNC:14902">
    <property type="gene designation" value="RAB6B"/>
</dbReference>
<dbReference type="HPA" id="ENSG00000154917">
    <property type="expression patterns" value="Tissue enriched (brain)"/>
</dbReference>
<dbReference type="MIM" id="615852">
    <property type="type" value="gene"/>
</dbReference>
<dbReference type="neXtProt" id="NX_Q9NRW1"/>
<dbReference type="OpenTargets" id="ENSG00000154917"/>
<dbReference type="PharmGKB" id="PA34147"/>
<dbReference type="VEuPathDB" id="HostDB:ENSG00000154917"/>
<dbReference type="eggNOG" id="KOG0094">
    <property type="taxonomic scope" value="Eukaryota"/>
</dbReference>
<dbReference type="GeneTree" id="ENSGT00940000159656"/>
<dbReference type="InParanoid" id="Q9NRW1"/>
<dbReference type="OMA" id="NCFFRET"/>
<dbReference type="OrthoDB" id="63533at2759"/>
<dbReference type="PAN-GO" id="Q9NRW1">
    <property type="GO annotations" value="7 GO annotations based on evolutionary models"/>
</dbReference>
<dbReference type="PhylomeDB" id="Q9NRW1"/>
<dbReference type="TreeFam" id="TF300803"/>
<dbReference type="BRENDA" id="3.6.5.2">
    <property type="organism ID" value="2681"/>
</dbReference>
<dbReference type="PathwayCommons" id="Q9NRW1"/>
<dbReference type="Reactome" id="R-HSA-6811436">
    <property type="pathway name" value="COPI-independent Golgi-to-ER retrograde traffic"/>
</dbReference>
<dbReference type="Reactome" id="R-HSA-6811440">
    <property type="pathway name" value="Retrograde transport at the Trans-Golgi-Network"/>
</dbReference>
<dbReference type="Reactome" id="R-HSA-8854214">
    <property type="pathway name" value="TBC/RABGAPs"/>
</dbReference>
<dbReference type="Reactome" id="R-HSA-8873719">
    <property type="pathway name" value="RAB geranylgeranylation"/>
</dbReference>
<dbReference type="Reactome" id="R-HSA-8876198">
    <property type="pathway name" value="RAB GEFs exchange GTP for GDP on RABs"/>
</dbReference>
<dbReference type="SignaLink" id="Q9NRW1"/>
<dbReference type="SIGNOR" id="Q9NRW1"/>
<dbReference type="BioGRID-ORCS" id="51560">
    <property type="hits" value="12 hits in 1150 CRISPR screens"/>
</dbReference>
<dbReference type="CD-CODE" id="91857CE7">
    <property type="entry name" value="Nucleolus"/>
</dbReference>
<dbReference type="CD-CODE" id="FB4E32DD">
    <property type="entry name" value="Presynaptic clusters and postsynaptic densities"/>
</dbReference>
<dbReference type="ChiTaRS" id="RAB6B">
    <property type="organism name" value="human"/>
</dbReference>
<dbReference type="EvolutionaryTrace" id="Q9NRW1"/>
<dbReference type="GeneWiki" id="RAB6B"/>
<dbReference type="GenomeRNAi" id="51560"/>
<dbReference type="Pharos" id="Q9NRW1">
    <property type="development level" value="Tbio"/>
</dbReference>
<dbReference type="PRO" id="PR:Q9NRW1"/>
<dbReference type="Proteomes" id="UP000005640">
    <property type="component" value="Chromosome 3"/>
</dbReference>
<dbReference type="RNAct" id="Q9NRW1">
    <property type="molecule type" value="protein"/>
</dbReference>
<dbReference type="Bgee" id="ENSG00000154917">
    <property type="expression patterns" value="Expressed in lateral nuclear group of thalamus and 170 other cell types or tissues"/>
</dbReference>
<dbReference type="ExpressionAtlas" id="Q9NRW1">
    <property type="expression patterns" value="baseline and differential"/>
</dbReference>
<dbReference type="GO" id="GO:0036064">
    <property type="term" value="C:ciliary basal body"/>
    <property type="evidence" value="ECO:0000314"/>
    <property type="project" value="HPA"/>
</dbReference>
<dbReference type="GO" id="GO:0031410">
    <property type="term" value="C:cytoplasmic vesicle"/>
    <property type="evidence" value="ECO:0007669"/>
    <property type="project" value="UniProtKB-KW"/>
</dbReference>
<dbReference type="GO" id="GO:0005829">
    <property type="term" value="C:cytosol"/>
    <property type="evidence" value="ECO:0007669"/>
    <property type="project" value="GOC"/>
</dbReference>
<dbReference type="GO" id="GO:0012505">
    <property type="term" value="C:endomembrane system"/>
    <property type="evidence" value="ECO:0000318"/>
    <property type="project" value="GO_Central"/>
</dbReference>
<dbReference type="GO" id="GO:0005793">
    <property type="term" value="C:endoplasmic reticulum-Golgi intermediate compartment"/>
    <property type="evidence" value="ECO:0007669"/>
    <property type="project" value="UniProtKB-SubCell"/>
</dbReference>
<dbReference type="GO" id="GO:0005794">
    <property type="term" value="C:Golgi apparatus"/>
    <property type="evidence" value="ECO:0000314"/>
    <property type="project" value="HPA"/>
</dbReference>
<dbReference type="GO" id="GO:0000139">
    <property type="term" value="C:Golgi membrane"/>
    <property type="evidence" value="ECO:0000314"/>
    <property type="project" value="UniProtKB"/>
</dbReference>
<dbReference type="GO" id="GO:0005654">
    <property type="term" value="C:nucleoplasm"/>
    <property type="evidence" value="ECO:0000314"/>
    <property type="project" value="HPA"/>
</dbReference>
<dbReference type="GO" id="GO:0005525">
    <property type="term" value="F:GTP binding"/>
    <property type="evidence" value="ECO:0007669"/>
    <property type="project" value="UniProtKB-KW"/>
</dbReference>
<dbReference type="GO" id="GO:0003924">
    <property type="term" value="F:GTPase activity"/>
    <property type="evidence" value="ECO:0000318"/>
    <property type="project" value="GO_Central"/>
</dbReference>
<dbReference type="GO" id="GO:0031489">
    <property type="term" value="F:myosin V binding"/>
    <property type="evidence" value="ECO:0000353"/>
    <property type="project" value="UniProtKB"/>
</dbReference>
<dbReference type="GO" id="GO:0007030">
    <property type="term" value="P:Golgi organization"/>
    <property type="evidence" value="ECO:0000315"/>
    <property type="project" value="UniProtKB"/>
</dbReference>
<dbReference type="GO" id="GO:0006891">
    <property type="term" value="P:intra-Golgi vesicle-mediated transport"/>
    <property type="evidence" value="ECO:0000318"/>
    <property type="project" value="GO_Central"/>
</dbReference>
<dbReference type="GO" id="GO:0006886">
    <property type="term" value="P:intracellular protein transport"/>
    <property type="evidence" value="ECO:0000318"/>
    <property type="project" value="GO_Central"/>
</dbReference>
<dbReference type="GO" id="GO:0031175">
    <property type="term" value="P:neuron projection development"/>
    <property type="evidence" value="ECO:0000304"/>
    <property type="project" value="UniProtKB"/>
</dbReference>
<dbReference type="GO" id="GO:1903292">
    <property type="term" value="P:protein localization to Golgi membrane"/>
    <property type="evidence" value="ECO:0000314"/>
    <property type="project" value="UniProtKB"/>
</dbReference>
<dbReference type="GO" id="GO:0042147">
    <property type="term" value="P:retrograde transport, endosome to Golgi"/>
    <property type="evidence" value="ECO:0000318"/>
    <property type="project" value="GO_Central"/>
</dbReference>
<dbReference type="GO" id="GO:0006890">
    <property type="term" value="P:retrograde vesicle-mediated transport, Golgi to endoplasmic reticulum"/>
    <property type="evidence" value="ECO:0000318"/>
    <property type="project" value="GO_Central"/>
</dbReference>
<dbReference type="CDD" id="cd01861">
    <property type="entry name" value="Rab6"/>
    <property type="match status" value="1"/>
</dbReference>
<dbReference type="FunFam" id="3.40.50.300:FF:001163">
    <property type="entry name" value="RAB6B, member RAS oncogene family"/>
    <property type="match status" value="1"/>
</dbReference>
<dbReference type="Gene3D" id="3.40.50.300">
    <property type="entry name" value="P-loop containing nucleotide triphosphate hydrolases"/>
    <property type="match status" value="1"/>
</dbReference>
<dbReference type="InterPro" id="IPR027417">
    <property type="entry name" value="P-loop_NTPase"/>
</dbReference>
<dbReference type="InterPro" id="IPR050227">
    <property type="entry name" value="Rab"/>
</dbReference>
<dbReference type="InterPro" id="IPR005225">
    <property type="entry name" value="Small_GTP-bd"/>
</dbReference>
<dbReference type="InterPro" id="IPR001806">
    <property type="entry name" value="Small_GTPase"/>
</dbReference>
<dbReference type="NCBIfam" id="TIGR00231">
    <property type="entry name" value="small_GTP"/>
    <property type="match status" value="1"/>
</dbReference>
<dbReference type="PANTHER" id="PTHR47977">
    <property type="entry name" value="RAS-RELATED PROTEIN RAB"/>
    <property type="match status" value="1"/>
</dbReference>
<dbReference type="Pfam" id="PF00071">
    <property type="entry name" value="Ras"/>
    <property type="match status" value="1"/>
</dbReference>
<dbReference type="PRINTS" id="PR00449">
    <property type="entry name" value="RASTRNSFRMNG"/>
</dbReference>
<dbReference type="SMART" id="SM00175">
    <property type="entry name" value="RAB"/>
    <property type="match status" value="1"/>
</dbReference>
<dbReference type="SMART" id="SM00176">
    <property type="entry name" value="RAN"/>
    <property type="match status" value="1"/>
</dbReference>
<dbReference type="SMART" id="SM00173">
    <property type="entry name" value="RAS"/>
    <property type="match status" value="1"/>
</dbReference>
<dbReference type="SMART" id="SM00174">
    <property type="entry name" value="RHO"/>
    <property type="match status" value="1"/>
</dbReference>
<dbReference type="SUPFAM" id="SSF52540">
    <property type="entry name" value="P-loop containing nucleoside triphosphate hydrolases"/>
    <property type="match status" value="1"/>
</dbReference>
<dbReference type="PROSITE" id="PS51419">
    <property type="entry name" value="RAB"/>
    <property type="match status" value="1"/>
</dbReference>
<proteinExistence type="evidence at protein level"/>
<name>RAB6B_HUMAN</name>
<evidence type="ECO:0000250" key="1"/>
<evidence type="ECO:0000250" key="2">
    <source>
        <dbReference type="UniProtKB" id="P20340"/>
    </source>
</evidence>
<evidence type="ECO:0000269" key="3">
    <source>
    </source>
</evidence>
<evidence type="ECO:0000269" key="4">
    <source>
    </source>
</evidence>
<evidence type="ECO:0000269" key="5">
    <source>
    </source>
</evidence>
<evidence type="ECO:0000269" key="6">
    <source>
    </source>
</evidence>
<evidence type="ECO:0000269" key="7">
    <source>
    </source>
</evidence>
<evidence type="ECO:0000269" key="8">
    <source>
    </source>
</evidence>
<evidence type="ECO:0000269" key="9">
    <source>
    </source>
</evidence>
<evidence type="ECO:0000303" key="10">
    <source>
    </source>
</evidence>
<evidence type="ECO:0000305" key="11"/>
<evidence type="ECO:0000305" key="12">
    <source>
    </source>
</evidence>
<evidence type="ECO:0000312" key="13">
    <source>
        <dbReference type="HGNC" id="HGNC:14902"/>
    </source>
</evidence>
<evidence type="ECO:0007744" key="14">
    <source>
        <dbReference type="PDB" id="2FE4"/>
    </source>
</evidence>
<evidence type="ECO:0007744" key="15">
    <source>
        <dbReference type="PDB" id="2FFQ"/>
    </source>
</evidence>
<evidence type="ECO:0007829" key="16">
    <source>
        <dbReference type="PDB" id="2E9S"/>
    </source>
</evidence>
<feature type="chain" id="PRO_0000121115" description="Ras-related protein Rab-6B">
    <location>
        <begin position="1"/>
        <end position="208"/>
    </location>
</feature>
<feature type="short sequence motif" description="Switch 1" evidence="3 14 15">
    <location>
        <begin position="39"/>
        <end position="49"/>
    </location>
</feature>
<feature type="short sequence motif" description="Switch 2" evidence="3 14 15">
    <location>
        <begin position="71"/>
        <end position="87"/>
    </location>
</feature>
<feature type="binding site" evidence="2">
    <location>
        <position position="23"/>
    </location>
    <ligand>
        <name>GTP</name>
        <dbReference type="ChEBI" id="CHEBI:37565"/>
    </ligand>
</feature>
<feature type="binding site" evidence="2">
    <location>
        <position position="24"/>
    </location>
    <ligand>
        <name>GTP</name>
        <dbReference type="ChEBI" id="CHEBI:37565"/>
    </ligand>
</feature>
<feature type="binding site" evidence="2">
    <location>
        <position position="25"/>
    </location>
    <ligand>
        <name>GTP</name>
        <dbReference type="ChEBI" id="CHEBI:37565"/>
    </ligand>
</feature>
<feature type="binding site" evidence="2">
    <location>
        <position position="26"/>
    </location>
    <ligand>
        <name>GTP</name>
        <dbReference type="ChEBI" id="CHEBI:37565"/>
    </ligand>
</feature>
<feature type="binding site" evidence="2">
    <location>
        <position position="27"/>
    </location>
    <ligand>
        <name>GTP</name>
        <dbReference type="ChEBI" id="CHEBI:37565"/>
    </ligand>
</feature>
<feature type="binding site" evidence="3 14 15">
    <location>
        <position position="27"/>
    </location>
    <ligand>
        <name>Mg(2+)</name>
        <dbReference type="ChEBI" id="CHEBI:18420"/>
    </ligand>
</feature>
<feature type="binding site" evidence="2">
    <location>
        <position position="28"/>
    </location>
    <ligand>
        <name>GTP</name>
        <dbReference type="ChEBI" id="CHEBI:37565"/>
    </ligand>
</feature>
<feature type="binding site" evidence="2">
    <location>
        <position position="39"/>
    </location>
    <ligand>
        <name>GTP</name>
        <dbReference type="ChEBI" id="CHEBI:37565"/>
    </ligand>
</feature>
<feature type="binding site" evidence="2">
    <location>
        <position position="40"/>
    </location>
    <ligand>
        <name>GTP</name>
        <dbReference type="ChEBI" id="CHEBI:37565"/>
    </ligand>
</feature>
<feature type="binding site" evidence="2">
    <location>
        <position position="42"/>
    </location>
    <ligand>
        <name>GTP</name>
        <dbReference type="ChEBI" id="CHEBI:37565"/>
    </ligand>
</feature>
<feature type="binding site" evidence="2">
    <location>
        <position position="45"/>
    </location>
    <ligand>
        <name>GTP</name>
        <dbReference type="ChEBI" id="CHEBI:37565"/>
    </ligand>
</feature>
<feature type="binding site" evidence="3 14 15">
    <location>
        <position position="45"/>
    </location>
    <ligand>
        <name>Mg(2+)</name>
        <dbReference type="ChEBI" id="CHEBI:18420"/>
    </ligand>
</feature>
<feature type="binding site" evidence="3 14 15">
    <location>
        <position position="68"/>
    </location>
    <ligand>
        <name>Mg(2+)</name>
        <dbReference type="ChEBI" id="CHEBI:18420"/>
    </ligand>
</feature>
<feature type="binding site" evidence="2">
    <location>
        <position position="71"/>
    </location>
    <ligand>
        <name>GTP</name>
        <dbReference type="ChEBI" id="CHEBI:37565"/>
    </ligand>
</feature>
<feature type="binding site" evidence="2">
    <location>
        <position position="126"/>
    </location>
    <ligand>
        <name>GTP</name>
        <dbReference type="ChEBI" id="CHEBI:37565"/>
    </ligand>
</feature>
<feature type="binding site" evidence="2">
    <location>
        <position position="127"/>
    </location>
    <ligand>
        <name>GTP</name>
        <dbReference type="ChEBI" id="CHEBI:37565"/>
    </ligand>
</feature>
<feature type="binding site" evidence="2">
    <location>
        <position position="129"/>
    </location>
    <ligand>
        <name>GTP</name>
        <dbReference type="ChEBI" id="CHEBI:37565"/>
    </ligand>
</feature>
<feature type="binding site" evidence="2">
    <location>
        <position position="156"/>
    </location>
    <ligand>
        <name>GTP</name>
        <dbReference type="ChEBI" id="CHEBI:37565"/>
    </ligand>
</feature>
<feature type="binding site" evidence="2">
    <location>
        <position position="157"/>
    </location>
    <ligand>
        <name>GTP</name>
        <dbReference type="ChEBI" id="CHEBI:37565"/>
    </ligand>
</feature>
<feature type="binding site" evidence="2">
    <location>
        <position position="158"/>
    </location>
    <ligand>
        <name>GTP</name>
        <dbReference type="ChEBI" id="CHEBI:37565"/>
    </ligand>
</feature>
<feature type="modified residue" description="O-AMP-tyrosine; by Legionella DrrA" evidence="6">
    <location>
        <position position="82"/>
    </location>
</feature>
<feature type="modified residue" description="Cysteine methyl ester" evidence="1">
    <location>
        <position position="208"/>
    </location>
</feature>
<feature type="lipid moiety-binding region" description="S-geranylgeranyl cysteine" evidence="1">
    <location>
        <position position="206"/>
    </location>
</feature>
<feature type="lipid moiety-binding region" description="S-geranylgeranyl cysteine" evidence="1">
    <location>
        <position position="208"/>
    </location>
</feature>
<feature type="splice variant" id="VSP_055831" description="In isoform 2." evidence="10">
    <original>MSAGGDFGNPLRKFKLVFLGEQSV</original>
    <variation>MWHMTRNWPLV</variation>
    <location>
        <begin position="1"/>
        <end position="24"/>
    </location>
</feature>
<feature type="mutagenesis site" description="Loss of APBA1-binding. Abolishes localization of VPS13B to the Golgi." evidence="7 8">
    <original>T</original>
    <variation>N</variation>
    <location>
        <position position="27"/>
    </location>
</feature>
<feature type="mutagenesis site" description="Interacts with APBA1. Abolishes localization of VPS13B to the Golgi." evidence="7 8">
    <original>Q</original>
    <variation>L</variation>
    <location>
        <position position="72"/>
    </location>
</feature>
<feature type="strand" evidence="16">
    <location>
        <begin position="15"/>
        <end position="19"/>
    </location>
</feature>
<feature type="helix" evidence="16">
    <location>
        <begin position="26"/>
        <end position="35"/>
    </location>
</feature>
<feature type="strand" evidence="16">
    <location>
        <begin position="47"/>
        <end position="57"/>
    </location>
</feature>
<feature type="strand" evidence="16">
    <location>
        <begin position="60"/>
        <end position="69"/>
    </location>
</feature>
<feature type="helix" evidence="16">
    <location>
        <begin position="73"/>
        <end position="78"/>
    </location>
</feature>
<feature type="helix" evidence="16">
    <location>
        <begin position="79"/>
        <end position="84"/>
    </location>
</feature>
<feature type="strand" evidence="16">
    <location>
        <begin position="87"/>
        <end position="94"/>
    </location>
</feature>
<feature type="helix" evidence="16">
    <location>
        <begin position="98"/>
        <end position="102"/>
    </location>
</feature>
<feature type="helix" evidence="16">
    <location>
        <begin position="104"/>
        <end position="115"/>
    </location>
</feature>
<feature type="strand" evidence="16">
    <location>
        <begin position="118"/>
        <end position="126"/>
    </location>
</feature>
<feature type="helix" evidence="16">
    <location>
        <begin position="131"/>
        <end position="133"/>
    </location>
</feature>
<feature type="helix" evidence="16">
    <location>
        <begin position="138"/>
        <end position="147"/>
    </location>
</feature>
<feature type="strand" evidence="16">
    <location>
        <begin position="151"/>
        <end position="154"/>
    </location>
</feature>
<feature type="turn" evidence="16">
    <location>
        <begin position="157"/>
        <end position="159"/>
    </location>
</feature>
<feature type="helix" evidence="16">
    <location>
        <begin position="163"/>
        <end position="174"/>
    </location>
</feature>
<organism>
    <name type="scientific">Homo sapiens</name>
    <name type="common">Human</name>
    <dbReference type="NCBI Taxonomy" id="9606"/>
    <lineage>
        <taxon>Eukaryota</taxon>
        <taxon>Metazoa</taxon>
        <taxon>Chordata</taxon>
        <taxon>Craniata</taxon>
        <taxon>Vertebrata</taxon>
        <taxon>Euteleostomi</taxon>
        <taxon>Mammalia</taxon>
        <taxon>Eutheria</taxon>
        <taxon>Euarchontoglires</taxon>
        <taxon>Primates</taxon>
        <taxon>Haplorrhini</taxon>
        <taxon>Catarrhini</taxon>
        <taxon>Hominidae</taxon>
        <taxon>Homo</taxon>
    </lineage>
</organism>
<sequence length="208" mass="23462">MSAGGDFGNPLRKFKLVFLGEQSVGKTSLITRFMYDSFDNTYQATIGIDFLSKTMYLEDRTVRLQLWDTAGQERFRSLIPSYIRDSTVAVVVYDITNLNSFQQTSKWIDDVRTERGSDVIIMLVGNKTDLADKRQITIEEGEQRAKELSVMFIETSAKTGYNVKQLFRRVASALPGMENVQEKSKEGMIDIKLDKPQEPPASEGGCSC</sequence>
<gene>
    <name evidence="13" type="primary">RAB6B</name>
</gene>
<accession>Q9NRW1</accession>
<accession>B2R5Z9</accession>
<accession>B7Z337</accession>
<accession>D3DND3</accession>
<accession>Q92929</accession>
<comment type="function">
    <text evidence="2 4 8 9">The small GTPases Rab are key regulators of intracellular membrane trafficking, from the formation of transport vesicles to their fusion with membranes. Rabs cycle between active GTP-bound and inactive GDP-bound states. In their active state, drive transport of vesicular carriers from donor organelles to acceptor organelles to regulate the membrane traffic that maintains organelle identity and morphology (By similarity). Recruits VPS13B to the Golgi membrane (PubMed:25492866). Regulates the compacted morphology of the Golgi (PubMed:26209634). Seems to have a role in retrograde membrane traffic at the level of the Golgi complex. May function in retrograde transport in neuronal cells (PubMed:17707369). Plays a role in neuron projection development (PubMed:25492866).</text>
</comment>
<comment type="catalytic activity">
    <reaction evidence="12">
        <text>GTP + H2O = GDP + phosphate + H(+)</text>
        <dbReference type="Rhea" id="RHEA:19669"/>
        <dbReference type="ChEBI" id="CHEBI:15377"/>
        <dbReference type="ChEBI" id="CHEBI:15378"/>
        <dbReference type="ChEBI" id="CHEBI:37565"/>
        <dbReference type="ChEBI" id="CHEBI:43474"/>
        <dbReference type="ChEBI" id="CHEBI:58189"/>
        <dbReference type="EC" id="3.6.5.2"/>
    </reaction>
    <physiologicalReaction direction="left-to-right" evidence="12">
        <dbReference type="Rhea" id="RHEA:19670"/>
    </physiologicalReaction>
</comment>
<comment type="cofactor">
    <cofactor evidence="3">
        <name>Mg(2+)</name>
        <dbReference type="ChEBI" id="CHEBI:18420"/>
    </cofactor>
</comment>
<comment type="activity regulation">
    <text evidence="11">Regulated by guanine nucleotide exchange factors (GEFs) which promote the exchange of bound GDP for free GTP, GTPase activating proteins (GAPs) which increase the GTP hydrolysis activity, and GDP dissociation inhibitors which inhibit the dissociation of the nucleotide from the GTPase.</text>
</comment>
<comment type="subunit">
    <text evidence="4 5 7 8">Interacts (GTP-bound) with BICD1 (via C-terminus); the interaction is direct (PubMed:17707369). Interacts (GDP-bound) with DYNLRB1 (PubMed:18044744). Interacts (GTP-bound) with APBA1/MINT1 isoform 2, also called Mint1_826, but not with isoform 1 (PubMed:23737971). Interacts (GTP-bound) with VPS13B isoform 2 (PubMed:25492866).</text>
</comment>
<comment type="interaction">
    <interactant intactId="EBI-1760079">
        <id>Q9NRW1</id>
    </interactant>
    <interactant intactId="EBI-9247455">
        <id>Q02410-2</id>
        <label>APBA1</label>
    </interactant>
    <organismsDiffer>false</organismsDiffer>
    <experiments>4</experiments>
</comment>
<comment type="interaction">
    <interactant intactId="EBI-1760079">
        <id>Q9NRW1</id>
    </interactant>
    <interactant intactId="EBI-11975051">
        <id>Q8TD16-2</id>
        <label>BICD2</label>
    </interactant>
    <organismsDiffer>false</organismsDiffer>
    <experiments>3</experiments>
</comment>
<comment type="interaction">
    <interactant intactId="EBI-1760079">
        <id>Q9NRW1</id>
    </interactant>
    <interactant intactId="EBI-3866319">
        <id>Q9Y2V7</id>
        <label>COG6</label>
    </interactant>
    <organismsDiffer>false</organismsDiffer>
    <experiments>5</experiments>
</comment>
<comment type="interaction">
    <interactant intactId="EBI-1760079">
        <id>Q9NRW1</id>
    </interactant>
    <interactant intactId="EBI-16439278">
        <id>Q6FHY5</id>
        <label>MEOX2</label>
    </interactant>
    <organismsDiffer>false</organismsDiffer>
    <experiments>3</experiments>
</comment>
<comment type="interaction">
    <interactant intactId="EBI-1760079">
        <id>Q9NRW1</id>
    </interactant>
    <interactant intactId="EBI-746784">
        <id>Q92871</id>
        <label>PMM1</label>
    </interactant>
    <organismsDiffer>false</organismsDiffer>
    <experiments>5</experiments>
</comment>
<comment type="interaction">
    <interactant intactId="EBI-1760079">
        <id>Q9NRW1</id>
    </interactant>
    <interactant intactId="EBI-12832744">
        <id>P52306-5</id>
        <label>RAP1GDS1</label>
    </interactant>
    <organismsDiffer>false</organismsDiffer>
    <experiments>5</experiments>
</comment>
<comment type="interaction">
    <interactant intactId="EBI-1760079">
        <id>Q9NRW1</id>
    </interactant>
    <interactant intactId="EBI-19952306">
        <id>O14492-2</id>
        <label>SH2B2</label>
    </interactant>
    <organismsDiffer>false</organismsDiffer>
    <experiments>3</experiments>
</comment>
<comment type="subcellular location">
    <subcellularLocation>
        <location evidence="4 5 8">Golgi apparatus membrane</location>
        <topology evidence="11">Lipid-anchor</topology>
    </subcellularLocation>
    <subcellularLocation>
        <location evidence="4">Endoplasmic reticulum-Golgi intermediate compartment</location>
    </subcellularLocation>
    <subcellularLocation>
        <location evidence="4">Cytoplasmic vesicle</location>
    </subcellularLocation>
    <text evidence="4">Colocalizes with BICD1 at vesicular structures that align along microtubules.</text>
</comment>
<comment type="alternative products">
    <event type="alternative splicing"/>
    <isoform>
        <id>Q9NRW1-1</id>
        <name>1</name>
        <sequence type="displayed"/>
    </isoform>
    <isoform>
        <id>Q9NRW1-2</id>
        <name>2</name>
        <sequence type="described" ref="VSP_055831"/>
    </isoform>
</comment>
<comment type="tissue specificity">
    <text>Predominantly expressed in brain.</text>
</comment>
<comment type="domain">
    <text evidence="3">Switch 1, switch 2 and the interswitch regions are characteristic of Rab GTPases and mediate the interactions with Rab downstream effectors. The switch regions undergo conformational changes upon nucleotide binding which drives interaction with specific sets of effector proteins, with most effectors only binding to GTP-bound Rab.</text>
</comment>
<comment type="similarity">
    <text evidence="11">Belongs to the small GTPase superfamily. Rab family.</text>
</comment>
<protein>
    <recommendedName>
        <fullName>Ras-related protein Rab-6B</fullName>
        <ecNumber evidence="12">3.6.5.2</ecNumber>
    </recommendedName>
</protein>